<gene>
    <name evidence="1" type="primary">atpA</name>
    <name type="ordered locus">Sare_4014</name>
</gene>
<feature type="chain" id="PRO_1000086890" description="ATP synthase subunit alpha">
    <location>
        <begin position="1"/>
        <end position="550"/>
    </location>
</feature>
<feature type="region of interest" description="Disordered" evidence="2">
    <location>
        <begin position="514"/>
        <end position="550"/>
    </location>
</feature>
<feature type="compositionally biased region" description="Basic and acidic residues" evidence="2">
    <location>
        <begin position="528"/>
        <end position="550"/>
    </location>
</feature>
<feature type="binding site" evidence="1">
    <location>
        <begin position="172"/>
        <end position="179"/>
    </location>
    <ligand>
        <name>ATP</name>
        <dbReference type="ChEBI" id="CHEBI:30616"/>
    </ligand>
</feature>
<feature type="site" description="Required for activity" evidence="1">
    <location>
        <position position="373"/>
    </location>
</feature>
<protein>
    <recommendedName>
        <fullName evidence="1">ATP synthase subunit alpha</fullName>
        <ecNumber evidence="1">7.1.2.2</ecNumber>
    </recommendedName>
    <alternativeName>
        <fullName evidence="1">ATP synthase F1 sector subunit alpha</fullName>
    </alternativeName>
    <alternativeName>
        <fullName evidence="1">F-ATPase subunit alpha</fullName>
    </alternativeName>
</protein>
<accession>A8M2J5</accession>
<keyword id="KW-0066">ATP synthesis</keyword>
<keyword id="KW-0067">ATP-binding</keyword>
<keyword id="KW-1003">Cell membrane</keyword>
<keyword id="KW-0139">CF(1)</keyword>
<keyword id="KW-0375">Hydrogen ion transport</keyword>
<keyword id="KW-0406">Ion transport</keyword>
<keyword id="KW-0472">Membrane</keyword>
<keyword id="KW-0547">Nucleotide-binding</keyword>
<keyword id="KW-1278">Translocase</keyword>
<keyword id="KW-0813">Transport</keyword>
<organism>
    <name type="scientific">Salinispora arenicola (strain CNS-205)</name>
    <dbReference type="NCBI Taxonomy" id="391037"/>
    <lineage>
        <taxon>Bacteria</taxon>
        <taxon>Bacillati</taxon>
        <taxon>Actinomycetota</taxon>
        <taxon>Actinomycetes</taxon>
        <taxon>Micromonosporales</taxon>
        <taxon>Micromonosporaceae</taxon>
        <taxon>Salinispora</taxon>
    </lineage>
</organism>
<comment type="function">
    <text evidence="1">Produces ATP from ADP in the presence of a proton gradient across the membrane. The alpha chain is a regulatory subunit.</text>
</comment>
<comment type="catalytic activity">
    <reaction evidence="1">
        <text>ATP + H2O + 4 H(+)(in) = ADP + phosphate + 5 H(+)(out)</text>
        <dbReference type="Rhea" id="RHEA:57720"/>
        <dbReference type="ChEBI" id="CHEBI:15377"/>
        <dbReference type="ChEBI" id="CHEBI:15378"/>
        <dbReference type="ChEBI" id="CHEBI:30616"/>
        <dbReference type="ChEBI" id="CHEBI:43474"/>
        <dbReference type="ChEBI" id="CHEBI:456216"/>
        <dbReference type="EC" id="7.1.2.2"/>
    </reaction>
</comment>
<comment type="subunit">
    <text evidence="1">F-type ATPases have 2 components, CF(1) - the catalytic core - and CF(0) - the membrane proton channel. CF(1) has five subunits: alpha(3), beta(3), gamma(1), delta(1), epsilon(1). CF(0) has three main subunits: a(1), b(2) and c(9-12). The alpha and beta chains form an alternating ring which encloses part of the gamma chain. CF(1) is attached to CF(0) by a central stalk formed by the gamma and epsilon chains, while a peripheral stalk is formed by the delta and b chains.</text>
</comment>
<comment type="subcellular location">
    <subcellularLocation>
        <location evidence="1">Cell membrane</location>
        <topology evidence="1">Peripheral membrane protein</topology>
    </subcellularLocation>
</comment>
<comment type="similarity">
    <text evidence="1">Belongs to the ATPase alpha/beta chains family.</text>
</comment>
<sequence>MAELTISTEEIRGALERYVSSYTADVSREEVGTVADAGDGIAHVEGLPSTMTNELLEFEDGTLGVALNLDVREIGVVVLGDFGGIEEGQRVKRTGRVLSAPVGDAFLGRVVNALGHPIDGLGDIANEGFRELELQAPNVMARKSVDEPLQTGIKAVDAMTPIGRGQRQLIIGDRKTGKTTVALDTILNQRDNWRSGDPKKQVRCIYVAVGQKASTIASIKGVLEEAGAMEYTTIVASPASDPAGFKYLAPYTGSTIGQHWMYGGKHVLVVFDDLSKQAEAYRAVSLLLRRPPGREAYPGDVFYLHSRLLERCAKLSDEMGGGSMTGLPIIETKANDISAFIPTNVISITDGQIFLETDLFNQGVRPAINVGTSVSRVGGAAQVKPMKKVAGSLRLNLAQYRELEAFAAFASDLDKASRAQLERGSRLVELLKQPNYSPFPVEEQVVSVWAGTEGRLDDIPVGEIRRFESEFLQYLRHKHEGVLAGIAAGTWGDEIIASLDAAISDFKNLFLGKEDEQRVNEPPAKPLAGEENRETVTRFRDGTTDRPAES</sequence>
<evidence type="ECO:0000255" key="1">
    <source>
        <dbReference type="HAMAP-Rule" id="MF_01346"/>
    </source>
</evidence>
<evidence type="ECO:0000256" key="2">
    <source>
        <dbReference type="SAM" id="MobiDB-lite"/>
    </source>
</evidence>
<proteinExistence type="inferred from homology"/>
<name>ATPA_SALAI</name>
<reference key="1">
    <citation type="submission" date="2007-10" db="EMBL/GenBank/DDBJ databases">
        <title>Complete sequence of Salinispora arenicola CNS-205.</title>
        <authorList>
            <consortium name="US DOE Joint Genome Institute"/>
            <person name="Copeland A."/>
            <person name="Lucas S."/>
            <person name="Lapidus A."/>
            <person name="Barry K."/>
            <person name="Glavina del Rio T."/>
            <person name="Dalin E."/>
            <person name="Tice H."/>
            <person name="Pitluck S."/>
            <person name="Foster B."/>
            <person name="Schmutz J."/>
            <person name="Larimer F."/>
            <person name="Land M."/>
            <person name="Hauser L."/>
            <person name="Kyrpides N."/>
            <person name="Ivanova N."/>
            <person name="Jensen P.R."/>
            <person name="Moore B.S."/>
            <person name="Penn K."/>
            <person name="Jenkins C."/>
            <person name="Udwary D."/>
            <person name="Xiang L."/>
            <person name="Gontang E."/>
            <person name="Richardson P."/>
        </authorList>
    </citation>
    <scope>NUCLEOTIDE SEQUENCE [LARGE SCALE GENOMIC DNA]</scope>
    <source>
        <strain>CNS-205</strain>
    </source>
</reference>
<dbReference type="EC" id="7.1.2.2" evidence="1"/>
<dbReference type="EMBL" id="CP000850">
    <property type="protein sequence ID" value="ABV99804.1"/>
    <property type="molecule type" value="Genomic_DNA"/>
</dbReference>
<dbReference type="SMR" id="A8M2J5"/>
<dbReference type="STRING" id="391037.Sare_4014"/>
<dbReference type="KEGG" id="saq:Sare_4014"/>
<dbReference type="PATRIC" id="fig|391037.6.peg.4051"/>
<dbReference type="eggNOG" id="COG0056">
    <property type="taxonomic scope" value="Bacteria"/>
</dbReference>
<dbReference type="HOGENOM" id="CLU_010091_2_1_11"/>
<dbReference type="OrthoDB" id="9803053at2"/>
<dbReference type="GO" id="GO:0005886">
    <property type="term" value="C:plasma membrane"/>
    <property type="evidence" value="ECO:0007669"/>
    <property type="project" value="UniProtKB-SubCell"/>
</dbReference>
<dbReference type="GO" id="GO:0045259">
    <property type="term" value="C:proton-transporting ATP synthase complex"/>
    <property type="evidence" value="ECO:0007669"/>
    <property type="project" value="UniProtKB-KW"/>
</dbReference>
<dbReference type="GO" id="GO:0043531">
    <property type="term" value="F:ADP binding"/>
    <property type="evidence" value="ECO:0007669"/>
    <property type="project" value="TreeGrafter"/>
</dbReference>
<dbReference type="GO" id="GO:0005524">
    <property type="term" value="F:ATP binding"/>
    <property type="evidence" value="ECO:0007669"/>
    <property type="project" value="UniProtKB-UniRule"/>
</dbReference>
<dbReference type="GO" id="GO:0046933">
    <property type="term" value="F:proton-transporting ATP synthase activity, rotational mechanism"/>
    <property type="evidence" value="ECO:0007669"/>
    <property type="project" value="UniProtKB-UniRule"/>
</dbReference>
<dbReference type="CDD" id="cd18113">
    <property type="entry name" value="ATP-synt_F1_alpha_C"/>
    <property type="match status" value="1"/>
</dbReference>
<dbReference type="CDD" id="cd18116">
    <property type="entry name" value="ATP-synt_F1_alpha_N"/>
    <property type="match status" value="1"/>
</dbReference>
<dbReference type="CDD" id="cd01132">
    <property type="entry name" value="F1-ATPase_alpha_CD"/>
    <property type="match status" value="1"/>
</dbReference>
<dbReference type="FunFam" id="1.20.150.20:FF:000001">
    <property type="entry name" value="ATP synthase subunit alpha"/>
    <property type="match status" value="1"/>
</dbReference>
<dbReference type="FunFam" id="3.40.50.300:FF:000002">
    <property type="entry name" value="ATP synthase subunit alpha"/>
    <property type="match status" value="1"/>
</dbReference>
<dbReference type="Gene3D" id="2.40.30.20">
    <property type="match status" value="1"/>
</dbReference>
<dbReference type="Gene3D" id="1.20.150.20">
    <property type="entry name" value="ATP synthase alpha/beta chain, C-terminal domain"/>
    <property type="match status" value="1"/>
</dbReference>
<dbReference type="Gene3D" id="3.40.50.300">
    <property type="entry name" value="P-loop containing nucleotide triphosphate hydrolases"/>
    <property type="match status" value="1"/>
</dbReference>
<dbReference type="HAMAP" id="MF_01346">
    <property type="entry name" value="ATP_synth_alpha_bact"/>
    <property type="match status" value="1"/>
</dbReference>
<dbReference type="InterPro" id="IPR023366">
    <property type="entry name" value="ATP_synth_asu-like_sf"/>
</dbReference>
<dbReference type="InterPro" id="IPR000793">
    <property type="entry name" value="ATP_synth_asu_C"/>
</dbReference>
<dbReference type="InterPro" id="IPR038376">
    <property type="entry name" value="ATP_synth_asu_C_sf"/>
</dbReference>
<dbReference type="InterPro" id="IPR033732">
    <property type="entry name" value="ATP_synth_F1_a_nt-bd_dom"/>
</dbReference>
<dbReference type="InterPro" id="IPR005294">
    <property type="entry name" value="ATP_synth_F1_asu"/>
</dbReference>
<dbReference type="InterPro" id="IPR020003">
    <property type="entry name" value="ATPase_a/bsu_AS"/>
</dbReference>
<dbReference type="InterPro" id="IPR004100">
    <property type="entry name" value="ATPase_F1/V1/A1_a/bsu_N"/>
</dbReference>
<dbReference type="InterPro" id="IPR036121">
    <property type="entry name" value="ATPase_F1/V1/A1_a/bsu_N_sf"/>
</dbReference>
<dbReference type="InterPro" id="IPR000194">
    <property type="entry name" value="ATPase_F1/V1/A1_a/bsu_nucl-bd"/>
</dbReference>
<dbReference type="InterPro" id="IPR027417">
    <property type="entry name" value="P-loop_NTPase"/>
</dbReference>
<dbReference type="NCBIfam" id="TIGR00962">
    <property type="entry name" value="atpA"/>
    <property type="match status" value="1"/>
</dbReference>
<dbReference type="NCBIfam" id="NF009884">
    <property type="entry name" value="PRK13343.1"/>
    <property type="match status" value="1"/>
</dbReference>
<dbReference type="PANTHER" id="PTHR48082">
    <property type="entry name" value="ATP SYNTHASE SUBUNIT ALPHA, MITOCHONDRIAL"/>
    <property type="match status" value="1"/>
</dbReference>
<dbReference type="PANTHER" id="PTHR48082:SF2">
    <property type="entry name" value="ATP SYNTHASE SUBUNIT ALPHA, MITOCHONDRIAL"/>
    <property type="match status" value="1"/>
</dbReference>
<dbReference type="Pfam" id="PF00006">
    <property type="entry name" value="ATP-synt_ab"/>
    <property type="match status" value="1"/>
</dbReference>
<dbReference type="Pfam" id="PF00306">
    <property type="entry name" value="ATP-synt_ab_C"/>
    <property type="match status" value="1"/>
</dbReference>
<dbReference type="Pfam" id="PF02874">
    <property type="entry name" value="ATP-synt_ab_N"/>
    <property type="match status" value="1"/>
</dbReference>
<dbReference type="SUPFAM" id="SSF47917">
    <property type="entry name" value="C-terminal domain of alpha and beta subunits of F1 ATP synthase"/>
    <property type="match status" value="1"/>
</dbReference>
<dbReference type="SUPFAM" id="SSF50615">
    <property type="entry name" value="N-terminal domain of alpha and beta subunits of F1 ATP synthase"/>
    <property type="match status" value="1"/>
</dbReference>
<dbReference type="SUPFAM" id="SSF52540">
    <property type="entry name" value="P-loop containing nucleoside triphosphate hydrolases"/>
    <property type="match status" value="1"/>
</dbReference>
<dbReference type="PROSITE" id="PS00152">
    <property type="entry name" value="ATPASE_ALPHA_BETA"/>
    <property type="match status" value="1"/>
</dbReference>